<evidence type="ECO:0000250" key="1">
    <source>
        <dbReference type="UniProtKB" id="O67911"/>
    </source>
</evidence>
<evidence type="ECO:0000269" key="2">
    <source>
    </source>
</evidence>
<evidence type="ECO:0000303" key="3">
    <source>
    </source>
</evidence>
<evidence type="ECO:0000305" key="4"/>
<evidence type="ECO:0000312" key="5">
    <source>
        <dbReference type="EMBL" id="AAS80904.1"/>
    </source>
</evidence>
<protein>
    <recommendedName>
        <fullName evidence="4">CC-adding tRNA nucleotidyltransferase</fullName>
        <shortName evidence="4">C-adding TNT</shortName>
        <ecNumber evidence="2">2.7.7.-</ecNumber>
    </recommendedName>
    <alternativeName>
        <fullName evidence="3">CC-adding enzyme</fullName>
    </alternativeName>
</protein>
<feature type="chain" id="PRO_0000447572" description="CC-adding tRNA nucleotidyltransferase">
    <location>
        <begin position="1"/>
        <end position="434"/>
    </location>
</feature>
<feature type="binding site" evidence="1">
    <location>
        <begin position="19"/>
        <end position="22"/>
    </location>
    <ligand>
        <name>CTP</name>
        <dbReference type="ChEBI" id="CHEBI:37563"/>
    </ligand>
</feature>
<feature type="binding site" evidence="1">
    <location>
        <position position="32"/>
    </location>
    <ligand>
        <name>Mg(2+)</name>
        <dbReference type="ChEBI" id="CHEBI:18420"/>
    </ligand>
</feature>
<feature type="binding site" evidence="1">
    <location>
        <position position="34"/>
    </location>
    <ligand>
        <name>Mg(2+)</name>
        <dbReference type="ChEBI" id="CHEBI:18420"/>
    </ligand>
</feature>
<feature type="binding site" evidence="1">
    <location>
        <begin position="90"/>
        <end position="91"/>
    </location>
    <ligand>
        <name>CTP</name>
        <dbReference type="ChEBI" id="CHEBI:37563"/>
    </ligand>
</feature>
<feature type="binding site" evidence="1">
    <location>
        <position position="95"/>
    </location>
    <ligand>
        <name>CTP</name>
        <dbReference type="ChEBI" id="CHEBI:37563"/>
    </ligand>
</feature>
<feature type="binding site" evidence="1">
    <location>
        <begin position="130"/>
        <end position="139"/>
    </location>
    <ligand>
        <name>CTP</name>
        <dbReference type="ChEBI" id="CHEBI:37563"/>
    </ligand>
</feature>
<feature type="binding site" evidence="1">
    <location>
        <position position="175"/>
    </location>
    <ligand>
        <name>CTP</name>
        <dbReference type="ChEBI" id="CHEBI:37563"/>
    </ligand>
</feature>
<comment type="function">
    <text evidence="2">tRNA nucleotidyltransferase involved in the synthesis of the tRNA CCA terminus. Adds the two cytidine residues to tRNA.</text>
</comment>
<comment type="catalytic activity">
    <reaction evidence="2">
        <text>a tRNA precursor + 2 CTP = a tRNA with a 3' CC end + 2 diphosphate</text>
        <dbReference type="Rhea" id="RHEA:60008"/>
        <dbReference type="Rhea" id="RHEA-COMP:10465"/>
        <dbReference type="Rhea" id="RHEA-COMP:15488"/>
        <dbReference type="ChEBI" id="CHEBI:33019"/>
        <dbReference type="ChEBI" id="CHEBI:37563"/>
        <dbReference type="ChEBI" id="CHEBI:74896"/>
        <dbReference type="ChEBI" id="CHEBI:83069"/>
    </reaction>
    <physiologicalReaction direction="left-to-right" evidence="2">
        <dbReference type="Rhea" id="RHEA:60009"/>
    </physiologicalReaction>
</comment>
<comment type="cofactor">
    <cofactor evidence="1">
        <name>Mg(2+)</name>
        <dbReference type="ChEBI" id="CHEBI:18420"/>
    </cofactor>
</comment>
<comment type="similarity">
    <text evidence="4">Belongs to the tRNA nucleotidyltransferase/poly(A) polymerase family.</text>
</comment>
<organism>
    <name type="scientific">Thermus thermophilus (strain ATCC BAA-163 / DSM 7039 / HB27)</name>
    <dbReference type="NCBI Taxonomy" id="262724"/>
    <lineage>
        <taxon>Bacteria</taxon>
        <taxon>Thermotogati</taxon>
        <taxon>Deinococcota</taxon>
        <taxon>Deinococci</taxon>
        <taxon>Thermales</taxon>
        <taxon>Thermaceae</taxon>
        <taxon>Thermus</taxon>
    </lineage>
</organism>
<reference key="1">
    <citation type="journal article" date="2004" name="Nat. Biotechnol.">
        <title>The genome sequence of the extreme thermophile Thermus thermophilus.</title>
        <authorList>
            <person name="Henne A."/>
            <person name="Brueggemann H."/>
            <person name="Raasch C."/>
            <person name="Wiezer A."/>
            <person name="Hartsch T."/>
            <person name="Liesegang H."/>
            <person name="Johann A."/>
            <person name="Lienard T."/>
            <person name="Gohl O."/>
            <person name="Martinez-Arias R."/>
            <person name="Jacobi C."/>
            <person name="Starkuviene V."/>
            <person name="Schlenczeck S."/>
            <person name="Dencker S."/>
            <person name="Huber R."/>
            <person name="Klenk H.-P."/>
            <person name="Kramer W."/>
            <person name="Merkl R."/>
            <person name="Gottschalk G."/>
            <person name="Fritz H.-J."/>
        </authorList>
    </citation>
    <scope>NUCLEOTIDE SEQUENCE [LARGE SCALE GENOMIC DNA]</scope>
    <source>
        <strain>ATCC BAA-163 / DSM 7039 / HB27</strain>
    </source>
</reference>
<reference key="2">
    <citation type="journal article" date="2008" name="Proc. Natl. Acad. Sci. U.S.A.">
        <title>Evolution of tRNA nucleotidyltransferases: a small deletion generated CC-adding enzymes.</title>
        <authorList>
            <person name="Neuenfeldt A."/>
            <person name="Just A."/>
            <person name="Betat H."/>
            <person name="Moerl M."/>
        </authorList>
    </citation>
    <scope>FUNCTION</scope>
    <scope>CATALYTIC ACTIVITY</scope>
    <source>
        <strain>ATCC BAA-163 / DSM 7039 / HB27</strain>
    </source>
</reference>
<gene>
    <name evidence="5" type="ordered locus">TT_C0556</name>
</gene>
<name>CATNT_THET2</name>
<proteinExistence type="evidence at protein level"/>
<accession>Q72K91</accession>
<keyword id="KW-0460">Magnesium</keyword>
<keyword id="KW-0479">Metal-binding</keyword>
<keyword id="KW-0547">Nucleotide-binding</keyword>
<keyword id="KW-0548">Nucleotidyltransferase</keyword>
<keyword id="KW-0694">RNA-binding</keyword>
<keyword id="KW-0808">Transferase</keyword>
<keyword id="KW-0819">tRNA processing</keyword>
<keyword id="KW-0820">tRNA-binding</keyword>
<dbReference type="EC" id="2.7.7.-" evidence="2"/>
<dbReference type="EMBL" id="AE017221">
    <property type="protein sequence ID" value="AAS80904.1"/>
    <property type="molecule type" value="Genomic_DNA"/>
</dbReference>
<dbReference type="SMR" id="Q72K91"/>
<dbReference type="KEGG" id="tth:TT_C0556"/>
<dbReference type="eggNOG" id="COG0617">
    <property type="taxonomic scope" value="Bacteria"/>
</dbReference>
<dbReference type="eggNOG" id="COG1353">
    <property type="taxonomic scope" value="Bacteria"/>
</dbReference>
<dbReference type="HOGENOM" id="CLU_015961_6_2_0"/>
<dbReference type="BRENDA" id="2.7.7.72">
    <property type="organism ID" value="2305"/>
</dbReference>
<dbReference type="Proteomes" id="UP000000592">
    <property type="component" value="Chromosome"/>
</dbReference>
<dbReference type="GO" id="GO:0052927">
    <property type="term" value="F:CC tRNA cytidylyltransferase activity"/>
    <property type="evidence" value="ECO:0007669"/>
    <property type="project" value="RHEA"/>
</dbReference>
<dbReference type="GO" id="GO:0046872">
    <property type="term" value="F:metal ion binding"/>
    <property type="evidence" value="ECO:0007669"/>
    <property type="project" value="UniProtKB-KW"/>
</dbReference>
<dbReference type="GO" id="GO:0000166">
    <property type="term" value="F:nucleotide binding"/>
    <property type="evidence" value="ECO:0007669"/>
    <property type="project" value="UniProtKB-KW"/>
</dbReference>
<dbReference type="GO" id="GO:0000049">
    <property type="term" value="F:tRNA binding"/>
    <property type="evidence" value="ECO:0007669"/>
    <property type="project" value="UniProtKB-KW"/>
</dbReference>
<dbReference type="GO" id="GO:0008033">
    <property type="term" value="P:tRNA processing"/>
    <property type="evidence" value="ECO:0007669"/>
    <property type="project" value="UniProtKB-KW"/>
</dbReference>
<dbReference type="CDD" id="cd00077">
    <property type="entry name" value="HDc"/>
    <property type="match status" value="1"/>
</dbReference>
<dbReference type="Gene3D" id="3.30.460.10">
    <property type="entry name" value="Beta Polymerase, domain 2"/>
    <property type="match status" value="1"/>
</dbReference>
<dbReference type="Gene3D" id="1.10.3090.10">
    <property type="entry name" value="cca-adding enzyme, domain 2"/>
    <property type="match status" value="1"/>
</dbReference>
<dbReference type="InterPro" id="IPR003607">
    <property type="entry name" value="HD/PDEase_dom"/>
</dbReference>
<dbReference type="InterPro" id="IPR006674">
    <property type="entry name" value="HD_domain"/>
</dbReference>
<dbReference type="InterPro" id="IPR006675">
    <property type="entry name" value="HDIG_dom"/>
</dbReference>
<dbReference type="InterPro" id="IPR043519">
    <property type="entry name" value="NT_sf"/>
</dbReference>
<dbReference type="InterPro" id="IPR002646">
    <property type="entry name" value="PolA_pol_head_dom"/>
</dbReference>
<dbReference type="InterPro" id="IPR032828">
    <property type="entry name" value="PolyA_RNA-bd"/>
</dbReference>
<dbReference type="InterPro" id="IPR050124">
    <property type="entry name" value="tRNA_CCA-adding_enzyme"/>
</dbReference>
<dbReference type="NCBIfam" id="TIGR00277">
    <property type="entry name" value="HDIG"/>
    <property type="match status" value="1"/>
</dbReference>
<dbReference type="PANTHER" id="PTHR47545:SF2">
    <property type="entry name" value="CC-ADDING TRNA NUCLEOTIDYLTRANSFERASE"/>
    <property type="match status" value="1"/>
</dbReference>
<dbReference type="PANTHER" id="PTHR47545">
    <property type="entry name" value="MULTIFUNCTIONAL CCA PROTEIN"/>
    <property type="match status" value="1"/>
</dbReference>
<dbReference type="Pfam" id="PF01966">
    <property type="entry name" value="HD"/>
    <property type="match status" value="1"/>
</dbReference>
<dbReference type="Pfam" id="PF01743">
    <property type="entry name" value="PolyA_pol"/>
    <property type="match status" value="1"/>
</dbReference>
<dbReference type="Pfam" id="PF12627">
    <property type="entry name" value="PolyA_pol_RNAbd"/>
    <property type="match status" value="1"/>
</dbReference>
<dbReference type="SMART" id="SM00471">
    <property type="entry name" value="HDc"/>
    <property type="match status" value="1"/>
</dbReference>
<dbReference type="SUPFAM" id="SSF81301">
    <property type="entry name" value="Nucleotidyltransferase"/>
    <property type="match status" value="1"/>
</dbReference>
<dbReference type="SUPFAM" id="SSF81891">
    <property type="entry name" value="Poly A polymerase C-terminal region-like"/>
    <property type="match status" value="1"/>
</dbReference>
<sequence>MAHMDFPFYTPKDAFPVGGAVRDLLLGRRPTDLDYAALDPEKAAEEAKRRLGGSLFPLDPKRGHYRLVVGERTLDFTPLEGRLEEDLLRRDYRVNALLWKGGAVFGLKGVEEDLRRRLLVPVREENLYQDHLRSLRGVRLAATLGFGLPRRTREALGRHARFLQAHPEALPARERVKEELARLLLSPRAAFGLRLLERVGLLGVYLPELALLVGLHQGGVHHLPAWEHTLSAVFHLLWLWPEAPLEARLAALFHDVGKPLTRRFDPEVGRFRFLGHAEVGAEIARASLFWLRFPKEVVERVAGLVRRHMDRLPEERKALRRFFLRRQDLLPDLVYLMAADRLATRGVEREAWEVLGRYEEVLKDPLPQRPLLSGEEVMALLGLQEGPEVGRALKALLEAQAEGRVGTKEEARAFLLYWRGGREAQASGTPDHPH</sequence>